<reference key="1">
    <citation type="submission" date="2007-11" db="EMBL/GenBank/DDBJ databases">
        <authorList>
            <consortium name="The Salmonella enterica serovar Paratyphi B Genome Sequencing Project"/>
            <person name="McClelland M."/>
            <person name="Sanderson E.K."/>
            <person name="Porwollik S."/>
            <person name="Spieth J."/>
            <person name="Clifton W.S."/>
            <person name="Fulton R."/>
            <person name="Cordes M."/>
            <person name="Wollam A."/>
            <person name="Shah N."/>
            <person name="Pepin K."/>
            <person name="Bhonagiri V."/>
            <person name="Nash W."/>
            <person name="Johnson M."/>
            <person name="Thiruvilangam P."/>
            <person name="Wilson R."/>
        </authorList>
    </citation>
    <scope>NUCLEOTIDE SEQUENCE [LARGE SCALE GENOMIC DNA]</scope>
    <source>
        <strain>ATCC BAA-1250 / SPB7</strain>
    </source>
</reference>
<gene>
    <name evidence="1" type="primary">pdxB</name>
    <name type="ordered locus">SPAB_00600</name>
</gene>
<organism>
    <name type="scientific">Salmonella paratyphi B (strain ATCC BAA-1250 / SPB7)</name>
    <dbReference type="NCBI Taxonomy" id="1016998"/>
    <lineage>
        <taxon>Bacteria</taxon>
        <taxon>Pseudomonadati</taxon>
        <taxon>Pseudomonadota</taxon>
        <taxon>Gammaproteobacteria</taxon>
        <taxon>Enterobacterales</taxon>
        <taxon>Enterobacteriaceae</taxon>
        <taxon>Salmonella</taxon>
    </lineage>
</organism>
<dbReference type="EC" id="1.1.1.290" evidence="1"/>
<dbReference type="EMBL" id="CP000886">
    <property type="protein sequence ID" value="ABX66026.1"/>
    <property type="molecule type" value="Genomic_DNA"/>
</dbReference>
<dbReference type="RefSeq" id="WP_000699178.1">
    <property type="nucleotide sequence ID" value="NC_010102.1"/>
</dbReference>
<dbReference type="SMR" id="A9N474"/>
<dbReference type="KEGG" id="spq:SPAB_00600"/>
<dbReference type="PATRIC" id="fig|1016998.12.peg.561"/>
<dbReference type="HOGENOM" id="CLU_019796_4_0_6"/>
<dbReference type="BioCyc" id="SENT1016998:SPAB_RS02480-MONOMER"/>
<dbReference type="UniPathway" id="UPA00244">
    <property type="reaction ID" value="UER00310"/>
</dbReference>
<dbReference type="Proteomes" id="UP000008556">
    <property type="component" value="Chromosome"/>
</dbReference>
<dbReference type="GO" id="GO:0005829">
    <property type="term" value="C:cytosol"/>
    <property type="evidence" value="ECO:0007669"/>
    <property type="project" value="TreeGrafter"/>
</dbReference>
<dbReference type="GO" id="GO:0033711">
    <property type="term" value="F:4-phosphoerythronate dehydrogenase activity"/>
    <property type="evidence" value="ECO:0007669"/>
    <property type="project" value="UniProtKB-EC"/>
</dbReference>
<dbReference type="GO" id="GO:0051287">
    <property type="term" value="F:NAD binding"/>
    <property type="evidence" value="ECO:0007669"/>
    <property type="project" value="InterPro"/>
</dbReference>
<dbReference type="GO" id="GO:0046983">
    <property type="term" value="F:protein dimerization activity"/>
    <property type="evidence" value="ECO:0007669"/>
    <property type="project" value="InterPro"/>
</dbReference>
<dbReference type="GO" id="GO:0036001">
    <property type="term" value="P:'de novo' pyridoxal 5'-phosphate biosynthetic process"/>
    <property type="evidence" value="ECO:0007669"/>
    <property type="project" value="TreeGrafter"/>
</dbReference>
<dbReference type="GO" id="GO:0008615">
    <property type="term" value="P:pyridoxine biosynthetic process"/>
    <property type="evidence" value="ECO:0007669"/>
    <property type="project" value="UniProtKB-UniRule"/>
</dbReference>
<dbReference type="CDD" id="cd12158">
    <property type="entry name" value="ErythrP_dh"/>
    <property type="match status" value="1"/>
</dbReference>
<dbReference type="FunFam" id="3.30.1370.170:FF:000001">
    <property type="entry name" value="Erythronate-4-phosphate dehydrogenase"/>
    <property type="match status" value="1"/>
</dbReference>
<dbReference type="FunFam" id="3.40.50.720:FF:000093">
    <property type="entry name" value="Erythronate-4-phosphate dehydrogenase"/>
    <property type="match status" value="1"/>
</dbReference>
<dbReference type="Gene3D" id="3.30.1370.170">
    <property type="match status" value="1"/>
</dbReference>
<dbReference type="Gene3D" id="3.40.50.720">
    <property type="entry name" value="NAD(P)-binding Rossmann-like Domain"/>
    <property type="match status" value="2"/>
</dbReference>
<dbReference type="HAMAP" id="MF_01825">
    <property type="entry name" value="PdxB"/>
    <property type="match status" value="1"/>
</dbReference>
<dbReference type="InterPro" id="IPR006139">
    <property type="entry name" value="D-isomer_2_OHA_DH_cat_dom"/>
</dbReference>
<dbReference type="InterPro" id="IPR029753">
    <property type="entry name" value="D-isomer_DH_CS"/>
</dbReference>
<dbReference type="InterPro" id="IPR029752">
    <property type="entry name" value="D-isomer_DH_CS1"/>
</dbReference>
<dbReference type="InterPro" id="IPR006140">
    <property type="entry name" value="D-isomer_DH_NAD-bd"/>
</dbReference>
<dbReference type="InterPro" id="IPR020921">
    <property type="entry name" value="Erythronate-4-P_DHase"/>
</dbReference>
<dbReference type="InterPro" id="IPR024531">
    <property type="entry name" value="Erythronate-4-P_DHase_dimer"/>
</dbReference>
<dbReference type="InterPro" id="IPR036291">
    <property type="entry name" value="NAD(P)-bd_dom_sf"/>
</dbReference>
<dbReference type="InterPro" id="IPR038251">
    <property type="entry name" value="PdxB_dimer_sf"/>
</dbReference>
<dbReference type="NCBIfam" id="NF001309">
    <property type="entry name" value="PRK00257.1"/>
    <property type="match status" value="1"/>
</dbReference>
<dbReference type="NCBIfam" id="NF011966">
    <property type="entry name" value="PRK15438.1"/>
    <property type="match status" value="1"/>
</dbReference>
<dbReference type="PANTHER" id="PTHR42938">
    <property type="entry name" value="FORMATE DEHYDROGENASE 1"/>
    <property type="match status" value="1"/>
</dbReference>
<dbReference type="PANTHER" id="PTHR42938:SF9">
    <property type="entry name" value="FORMATE DEHYDROGENASE 1"/>
    <property type="match status" value="1"/>
</dbReference>
<dbReference type="Pfam" id="PF00389">
    <property type="entry name" value="2-Hacid_dh"/>
    <property type="match status" value="1"/>
</dbReference>
<dbReference type="Pfam" id="PF02826">
    <property type="entry name" value="2-Hacid_dh_C"/>
    <property type="match status" value="1"/>
</dbReference>
<dbReference type="Pfam" id="PF11890">
    <property type="entry name" value="DUF3410"/>
    <property type="match status" value="1"/>
</dbReference>
<dbReference type="SUPFAM" id="SSF52283">
    <property type="entry name" value="Formate/glycerate dehydrogenase catalytic domain-like"/>
    <property type="match status" value="1"/>
</dbReference>
<dbReference type="SUPFAM" id="SSF51735">
    <property type="entry name" value="NAD(P)-binding Rossmann-fold domains"/>
    <property type="match status" value="1"/>
</dbReference>
<dbReference type="PROSITE" id="PS00065">
    <property type="entry name" value="D_2_HYDROXYACID_DH_1"/>
    <property type="match status" value="1"/>
</dbReference>
<dbReference type="PROSITE" id="PS00671">
    <property type="entry name" value="D_2_HYDROXYACID_DH_3"/>
    <property type="match status" value="1"/>
</dbReference>
<feature type="chain" id="PRO_1000088426" description="Erythronate-4-phosphate dehydrogenase">
    <location>
        <begin position="1"/>
        <end position="378"/>
    </location>
</feature>
<feature type="active site" evidence="1">
    <location>
        <position position="208"/>
    </location>
</feature>
<feature type="active site" evidence="1">
    <location>
        <position position="237"/>
    </location>
</feature>
<feature type="active site" description="Proton donor" evidence="1">
    <location>
        <position position="254"/>
    </location>
</feature>
<feature type="binding site" evidence="1">
    <location>
        <position position="45"/>
    </location>
    <ligand>
        <name>substrate</name>
    </ligand>
</feature>
<feature type="binding site" evidence="1">
    <location>
        <position position="66"/>
    </location>
    <ligand>
        <name>substrate</name>
    </ligand>
</feature>
<feature type="binding site" evidence="1">
    <location>
        <position position="146"/>
    </location>
    <ligand>
        <name>NAD(+)</name>
        <dbReference type="ChEBI" id="CHEBI:57540"/>
    </ligand>
</feature>
<feature type="binding site" evidence="1">
    <location>
        <position position="175"/>
    </location>
    <ligand>
        <name>NAD(+)</name>
        <dbReference type="ChEBI" id="CHEBI:57540"/>
    </ligand>
</feature>
<feature type="binding site" evidence="1">
    <location>
        <position position="232"/>
    </location>
    <ligand>
        <name>NAD(+)</name>
        <dbReference type="ChEBI" id="CHEBI:57540"/>
    </ligand>
</feature>
<feature type="binding site" evidence="1">
    <location>
        <position position="257"/>
    </location>
    <ligand>
        <name>NAD(+)</name>
        <dbReference type="ChEBI" id="CHEBI:57540"/>
    </ligand>
</feature>
<feature type="binding site" evidence="1">
    <location>
        <position position="258"/>
    </location>
    <ligand>
        <name>substrate</name>
    </ligand>
</feature>
<protein>
    <recommendedName>
        <fullName evidence="1">Erythronate-4-phosphate dehydrogenase</fullName>
        <ecNumber evidence="1">1.1.1.290</ecNumber>
    </recommendedName>
</protein>
<evidence type="ECO:0000255" key="1">
    <source>
        <dbReference type="HAMAP-Rule" id="MF_01825"/>
    </source>
</evidence>
<accession>A9N474</accession>
<keyword id="KW-0963">Cytoplasm</keyword>
<keyword id="KW-0520">NAD</keyword>
<keyword id="KW-0560">Oxidoreductase</keyword>
<keyword id="KW-0664">Pyridoxine biosynthesis</keyword>
<sequence length="378" mass="41298">MKILVDENMPYARELFSRLGEVKAVPGRPIPVEELNHADALMVRSVTKVNESLLSGTPINFVGTATAGTDHVDEAWLKQAGIGFSAAPGCNAIAVVEYVFSALLMLAERDGFSLRDRTIGIVGVGNVGSRLQTRLEALGIRTLLCDPPRAARGDEGDFRTLDELVQEADVLTFHTPLYKDGPYKTLHLADETLIRRLKPGAILINACRGPVVDNAALLARLNAGQPLSVVLDVWEGEPDLNVALLEAVDIGTSHIAGYTLEGKARGTTQVFEAYSAFIGREQRVALETLLPAPEFGRITLHGPLDQPTLKRLAHLVYDVRRDDAPLRKVAGIPGEFDKLRKNYLERREWSSLYVMCDDETAAALLCKLGFNAVHHPAH</sequence>
<comment type="function">
    <text evidence="1">Catalyzes the oxidation of erythronate-4-phosphate to 3-hydroxy-2-oxo-4-phosphonooxybutanoate.</text>
</comment>
<comment type="catalytic activity">
    <reaction evidence="1">
        <text>4-phospho-D-erythronate + NAD(+) = (R)-3-hydroxy-2-oxo-4-phosphooxybutanoate + NADH + H(+)</text>
        <dbReference type="Rhea" id="RHEA:18829"/>
        <dbReference type="ChEBI" id="CHEBI:15378"/>
        <dbReference type="ChEBI" id="CHEBI:57540"/>
        <dbReference type="ChEBI" id="CHEBI:57945"/>
        <dbReference type="ChEBI" id="CHEBI:58538"/>
        <dbReference type="ChEBI" id="CHEBI:58766"/>
        <dbReference type="EC" id="1.1.1.290"/>
    </reaction>
</comment>
<comment type="pathway">
    <text evidence="1">Cofactor biosynthesis; pyridoxine 5'-phosphate biosynthesis; pyridoxine 5'-phosphate from D-erythrose 4-phosphate: step 2/5.</text>
</comment>
<comment type="subunit">
    <text evidence="1">Homodimer.</text>
</comment>
<comment type="subcellular location">
    <subcellularLocation>
        <location evidence="1">Cytoplasm</location>
    </subcellularLocation>
</comment>
<comment type="similarity">
    <text evidence="1">Belongs to the D-isomer specific 2-hydroxyacid dehydrogenase family. PdxB subfamily.</text>
</comment>
<name>PDXB_SALPB</name>
<proteinExistence type="inferred from homology"/>